<keyword id="KW-0028">Amino-acid biosynthesis</keyword>
<keyword id="KW-0963">Cytoplasm</keyword>
<keyword id="KW-0223">Dioxygenase</keyword>
<keyword id="KW-0408">Iron</keyword>
<keyword id="KW-0479">Metal-binding</keyword>
<keyword id="KW-0486">Methionine biosynthesis</keyword>
<keyword id="KW-0533">Nickel</keyword>
<keyword id="KW-0539">Nucleus</keyword>
<keyword id="KW-0560">Oxidoreductase</keyword>
<keyword id="KW-1185">Reference proteome</keyword>
<comment type="function">
    <text evidence="1">Catalyzes 2 different reactions between oxygen and the acireductone 1,2-dihydroxy-3-keto-5-methylthiopentene (DHK-MTPene) depending upon the metal bound in the active site. Fe-containing acireductone dioxygenase (Fe-ARD) produces formate and 2-keto-4-methylthiobutyrate (KMTB), the alpha-ketoacid precursor of methionine in the methionine recycle pathway. Ni-containing acireductone dioxygenase (Ni-ARD) produces methylthiopropionate, carbon monoxide and formate, and does not lie on the methionine recycle pathway.</text>
</comment>
<comment type="catalytic activity">
    <reaction evidence="1">
        <text>1,2-dihydroxy-5-(methylsulfanyl)pent-1-en-3-one + O2 = 4-methylsulfanyl-2-oxobutanoate + formate + 2 H(+)</text>
        <dbReference type="Rhea" id="RHEA:24504"/>
        <dbReference type="ChEBI" id="CHEBI:15378"/>
        <dbReference type="ChEBI" id="CHEBI:15379"/>
        <dbReference type="ChEBI" id="CHEBI:15740"/>
        <dbReference type="ChEBI" id="CHEBI:16723"/>
        <dbReference type="ChEBI" id="CHEBI:49252"/>
        <dbReference type="EC" id="1.13.11.54"/>
    </reaction>
</comment>
<comment type="catalytic activity">
    <reaction evidence="1">
        <text>1,2-dihydroxy-5-(methylsulfanyl)pent-1-en-3-one + O2 = 3-(methylsulfanyl)propanoate + CO + formate + 2 H(+)</text>
        <dbReference type="Rhea" id="RHEA:14161"/>
        <dbReference type="ChEBI" id="CHEBI:15378"/>
        <dbReference type="ChEBI" id="CHEBI:15379"/>
        <dbReference type="ChEBI" id="CHEBI:15740"/>
        <dbReference type="ChEBI" id="CHEBI:17245"/>
        <dbReference type="ChEBI" id="CHEBI:49016"/>
        <dbReference type="ChEBI" id="CHEBI:49252"/>
        <dbReference type="EC" id="1.13.11.53"/>
    </reaction>
</comment>
<comment type="cofactor">
    <cofactor evidence="1">
        <name>Fe(2+)</name>
        <dbReference type="ChEBI" id="CHEBI:29033"/>
    </cofactor>
    <cofactor evidence="1">
        <name>Ni(2+)</name>
        <dbReference type="ChEBI" id="CHEBI:49786"/>
    </cofactor>
    <text evidence="1">Binds either 1 Fe or Ni cation per monomer. Iron-binding promotes an acireductone dioxygenase reaction producing 2-keto-4-methylthiobutyrate, while nickel-binding promotes an acireductone dioxygenase reaction producing 3-(methylsulfanyl)propanoate.</text>
</comment>
<comment type="pathway">
    <text evidence="1">Amino-acid biosynthesis; L-methionine biosynthesis via salvage pathway; L-methionine from S-methyl-5-thio-alpha-D-ribose 1-phosphate: step 5/6.</text>
</comment>
<comment type="subcellular location">
    <subcellularLocation>
        <location evidence="1">Cytoplasm</location>
    </subcellularLocation>
    <subcellularLocation>
        <location evidence="1">Nucleus</location>
    </subcellularLocation>
</comment>
<comment type="similarity">
    <text evidence="1">Belongs to the acireductone dioxygenase (ARD) family.</text>
</comment>
<dbReference type="EC" id="1.13.11.54" evidence="1"/>
<dbReference type="EC" id="1.13.11.53" evidence="1"/>
<dbReference type="EMBL" id="FN595749">
    <property type="protein sequence ID" value="CCB50458.1"/>
    <property type="molecule type" value="Genomic_DNA"/>
</dbReference>
<dbReference type="EMBL" id="FN597023">
    <property type="status" value="NOT_ANNOTATED_CDS"/>
    <property type="molecule type" value="Genomic_DNA"/>
</dbReference>
<dbReference type="RefSeq" id="XP_010649963.1">
    <property type="nucleotide sequence ID" value="XM_010651661.2"/>
</dbReference>
<dbReference type="SMR" id="F6HDT7"/>
<dbReference type="FunCoup" id="F6HDT7">
    <property type="interactions" value="2540"/>
</dbReference>
<dbReference type="STRING" id="29760.F6HDT7"/>
<dbReference type="PaxDb" id="29760-VIT_05s0020g04080.t01"/>
<dbReference type="EnsemblPlants" id="Vitvi05g00560_t001">
    <property type="protein sequence ID" value="Vitvi05g00560_P001"/>
    <property type="gene ID" value="Vitvi05g00560"/>
</dbReference>
<dbReference type="Gramene" id="Vitvi05g00560_t001">
    <property type="protein sequence ID" value="Vitvi05g00560_P001"/>
    <property type="gene ID" value="Vitvi05g00560"/>
</dbReference>
<dbReference type="eggNOG" id="KOG2107">
    <property type="taxonomic scope" value="Eukaryota"/>
</dbReference>
<dbReference type="HOGENOM" id="CLU_090154_0_0_1"/>
<dbReference type="InParanoid" id="F6HDT7"/>
<dbReference type="OrthoDB" id="1867259at2759"/>
<dbReference type="UniPathway" id="UPA00904">
    <property type="reaction ID" value="UER00878"/>
</dbReference>
<dbReference type="Proteomes" id="UP000009183">
    <property type="component" value="Chromosome 5"/>
</dbReference>
<dbReference type="Proteomes" id="UP000009183">
    <property type="component" value="Chromosome 5, unordered"/>
</dbReference>
<dbReference type="ExpressionAtlas" id="F6HDT7">
    <property type="expression patterns" value="baseline and differential"/>
</dbReference>
<dbReference type="GO" id="GO:0005737">
    <property type="term" value="C:cytoplasm"/>
    <property type="evidence" value="ECO:0007669"/>
    <property type="project" value="UniProtKB-SubCell"/>
</dbReference>
<dbReference type="GO" id="GO:0005634">
    <property type="term" value="C:nucleus"/>
    <property type="evidence" value="ECO:0007669"/>
    <property type="project" value="UniProtKB-SubCell"/>
</dbReference>
<dbReference type="GO" id="GO:0010308">
    <property type="term" value="F:acireductone dioxygenase (Ni2+-requiring) activity"/>
    <property type="evidence" value="ECO:0007669"/>
    <property type="project" value="UniProtKB-UniRule"/>
</dbReference>
<dbReference type="GO" id="GO:0010309">
    <property type="term" value="F:acireductone dioxygenase [iron(II)-requiring] activity"/>
    <property type="evidence" value="ECO:0000318"/>
    <property type="project" value="GO_Central"/>
</dbReference>
<dbReference type="GO" id="GO:0005506">
    <property type="term" value="F:iron ion binding"/>
    <property type="evidence" value="ECO:0007669"/>
    <property type="project" value="UniProtKB-UniRule"/>
</dbReference>
<dbReference type="GO" id="GO:0016151">
    <property type="term" value="F:nickel cation binding"/>
    <property type="evidence" value="ECO:0007669"/>
    <property type="project" value="UniProtKB-UniRule"/>
</dbReference>
<dbReference type="GO" id="GO:0019509">
    <property type="term" value="P:L-methionine salvage from methylthioadenosine"/>
    <property type="evidence" value="ECO:0007669"/>
    <property type="project" value="UniProtKB-UniRule"/>
</dbReference>
<dbReference type="GO" id="GO:0006555">
    <property type="term" value="P:methionine metabolic process"/>
    <property type="evidence" value="ECO:0000318"/>
    <property type="project" value="GO_Central"/>
</dbReference>
<dbReference type="CDD" id="cd02232">
    <property type="entry name" value="cupin_ARD"/>
    <property type="match status" value="1"/>
</dbReference>
<dbReference type="FunFam" id="2.60.120.10:FF:000031">
    <property type="entry name" value="1,2-dihydroxy-3-keto-5-methylthiopentene dioxygenase"/>
    <property type="match status" value="1"/>
</dbReference>
<dbReference type="Gene3D" id="2.60.120.10">
    <property type="entry name" value="Jelly Rolls"/>
    <property type="match status" value="1"/>
</dbReference>
<dbReference type="HAMAP" id="MF_03154">
    <property type="entry name" value="Salvage_MtnD_euk"/>
    <property type="match status" value="1"/>
</dbReference>
<dbReference type="InterPro" id="IPR004313">
    <property type="entry name" value="ARD"/>
</dbReference>
<dbReference type="InterPro" id="IPR027496">
    <property type="entry name" value="ARD_euk"/>
</dbReference>
<dbReference type="InterPro" id="IPR014710">
    <property type="entry name" value="RmlC-like_jellyroll"/>
</dbReference>
<dbReference type="InterPro" id="IPR011051">
    <property type="entry name" value="RmlC_Cupin_sf"/>
</dbReference>
<dbReference type="PANTHER" id="PTHR23418">
    <property type="entry name" value="ACIREDUCTONE DIOXYGENASE"/>
    <property type="match status" value="1"/>
</dbReference>
<dbReference type="PANTHER" id="PTHR23418:SF0">
    <property type="entry name" value="ACIREDUCTONE DIOXYGENASE"/>
    <property type="match status" value="1"/>
</dbReference>
<dbReference type="Pfam" id="PF03079">
    <property type="entry name" value="ARD"/>
    <property type="match status" value="1"/>
</dbReference>
<dbReference type="SUPFAM" id="SSF51182">
    <property type="entry name" value="RmlC-like cupins"/>
    <property type="match status" value="1"/>
</dbReference>
<protein>
    <recommendedName>
        <fullName evidence="1">Acireductone dioxygenase 2</fullName>
    </recommendedName>
    <alternativeName>
        <fullName evidence="1">Acireductone dioxygenase (Fe(2+)-requiring) 2</fullName>
        <shortName evidence="1">ARD' 2</shortName>
        <shortName evidence="1">Fe-ARD 2</shortName>
        <ecNumber evidence="1">1.13.11.54</ecNumber>
    </alternativeName>
    <alternativeName>
        <fullName evidence="1">Acireductone dioxygenase (Ni(2+)-requiring) 2</fullName>
        <shortName evidence="1">ARD 2</shortName>
        <shortName evidence="1">Ni-ARD 2</shortName>
        <ecNumber evidence="1">1.13.11.53</ecNumber>
    </alternativeName>
</protein>
<proteinExistence type="inferred from homology"/>
<gene>
    <name type="ordered locus">VIT_05s0020g04080</name>
</gene>
<evidence type="ECO:0000255" key="1">
    <source>
        <dbReference type="HAMAP-Rule" id="MF_03154"/>
    </source>
</evidence>
<organism>
    <name type="scientific">Vitis vinifera</name>
    <name type="common">Grape</name>
    <dbReference type="NCBI Taxonomy" id="29760"/>
    <lineage>
        <taxon>Eukaryota</taxon>
        <taxon>Viridiplantae</taxon>
        <taxon>Streptophyta</taxon>
        <taxon>Embryophyta</taxon>
        <taxon>Tracheophyta</taxon>
        <taxon>Spermatophyta</taxon>
        <taxon>Magnoliopsida</taxon>
        <taxon>eudicotyledons</taxon>
        <taxon>Gunneridae</taxon>
        <taxon>Pentapetalae</taxon>
        <taxon>rosids</taxon>
        <taxon>Vitales</taxon>
        <taxon>Vitaceae</taxon>
        <taxon>Viteae</taxon>
        <taxon>Vitis</taxon>
    </lineage>
</organism>
<sequence>MGSFKDDREEVLQAWYMDDSDEDQRLPHHRDPKEFVSLDQLAKLGVLSWRLDADNYETDEELKKIREARGYSYMDFCEVCPEKLPNYEEKIKNFFEEHLHTDEEIRYCVAGSGYFDVRDQNDSWIRVWLKKGGMIVLPAGIYHRFTLDSNNYIKAMRLFVGDPVWTPFNRPHDNLPARQEYLEAFGQKEAANHVVDAAA</sequence>
<feature type="chain" id="PRO_0000414348" description="Acireductone dioxygenase 2">
    <location>
        <begin position="1"/>
        <end position="199"/>
    </location>
</feature>
<feature type="binding site" evidence="1">
    <location>
        <position position="98"/>
    </location>
    <ligand>
        <name>Fe(2+)</name>
        <dbReference type="ChEBI" id="CHEBI:29033"/>
        <note>for iron-dependent acireductone dioxygenase activity</note>
    </ligand>
</feature>
<feature type="binding site" evidence="1">
    <location>
        <position position="98"/>
    </location>
    <ligand>
        <name>Ni(2+)</name>
        <dbReference type="ChEBI" id="CHEBI:49786"/>
        <note>for nickel-dependent acireductone dioxygenase activity</note>
    </ligand>
</feature>
<feature type="binding site" evidence="1">
    <location>
        <position position="100"/>
    </location>
    <ligand>
        <name>Fe(2+)</name>
        <dbReference type="ChEBI" id="CHEBI:29033"/>
        <note>for iron-dependent acireductone dioxygenase activity</note>
    </ligand>
</feature>
<feature type="binding site" evidence="1">
    <location>
        <position position="100"/>
    </location>
    <ligand>
        <name>Ni(2+)</name>
        <dbReference type="ChEBI" id="CHEBI:49786"/>
        <note>for nickel-dependent acireductone dioxygenase activity</note>
    </ligand>
</feature>
<feature type="binding site" evidence="1">
    <location>
        <position position="104"/>
    </location>
    <ligand>
        <name>Fe(2+)</name>
        <dbReference type="ChEBI" id="CHEBI:29033"/>
        <note>for iron-dependent acireductone dioxygenase activity</note>
    </ligand>
</feature>
<feature type="binding site" evidence="1">
    <location>
        <position position="104"/>
    </location>
    <ligand>
        <name>Ni(2+)</name>
        <dbReference type="ChEBI" id="CHEBI:49786"/>
        <note>for nickel-dependent acireductone dioxygenase activity</note>
    </ligand>
</feature>
<feature type="binding site" evidence="1">
    <location>
        <position position="143"/>
    </location>
    <ligand>
        <name>Fe(2+)</name>
        <dbReference type="ChEBI" id="CHEBI:29033"/>
        <note>for iron-dependent acireductone dioxygenase activity</note>
    </ligand>
</feature>
<feature type="binding site" evidence="1">
    <location>
        <position position="143"/>
    </location>
    <ligand>
        <name>Ni(2+)</name>
        <dbReference type="ChEBI" id="CHEBI:49786"/>
        <note>for nickel-dependent acireductone dioxygenase activity</note>
    </ligand>
</feature>
<reference key="1">
    <citation type="journal article" date="2007" name="Nature">
        <title>The grapevine genome sequence suggests ancestral hexaploidization in major angiosperm phyla.</title>
        <authorList>
            <person name="Jaillon O."/>
            <person name="Aury J.-M."/>
            <person name="Noel B."/>
            <person name="Policriti A."/>
            <person name="Clepet C."/>
            <person name="Casagrande A."/>
            <person name="Choisne N."/>
            <person name="Aubourg S."/>
            <person name="Vitulo N."/>
            <person name="Jubin C."/>
            <person name="Vezzi A."/>
            <person name="Legeai F."/>
            <person name="Hugueney P."/>
            <person name="Dasilva C."/>
            <person name="Horner D."/>
            <person name="Mica E."/>
            <person name="Jublot D."/>
            <person name="Poulain J."/>
            <person name="Bruyere C."/>
            <person name="Billault A."/>
            <person name="Segurens B."/>
            <person name="Gouyvenoux M."/>
            <person name="Ugarte E."/>
            <person name="Cattonaro F."/>
            <person name="Anthouard V."/>
            <person name="Vico V."/>
            <person name="Del Fabbro C."/>
            <person name="Alaux M."/>
            <person name="Di Gaspero G."/>
            <person name="Dumas V."/>
            <person name="Felice N."/>
            <person name="Paillard S."/>
            <person name="Juman I."/>
            <person name="Moroldo M."/>
            <person name="Scalabrin S."/>
            <person name="Canaguier A."/>
            <person name="Le Clainche I."/>
            <person name="Malacrida G."/>
            <person name="Durand E."/>
            <person name="Pesole G."/>
            <person name="Laucou V."/>
            <person name="Chatelet P."/>
            <person name="Merdinoglu D."/>
            <person name="Delledonne M."/>
            <person name="Pezzotti M."/>
            <person name="Lecharny A."/>
            <person name="Scarpelli C."/>
            <person name="Artiguenave F."/>
            <person name="Pe M.E."/>
            <person name="Valle G."/>
            <person name="Morgante M."/>
            <person name="Caboche M."/>
            <person name="Adam-Blondon A.-F."/>
            <person name="Weissenbach J."/>
            <person name="Quetier F."/>
            <person name="Wincker P."/>
        </authorList>
    </citation>
    <scope>NUCLEOTIDE SEQUENCE [LARGE SCALE GENOMIC DNA]</scope>
    <source>
        <strain>cv. Pinot noir / PN40024</strain>
    </source>
</reference>
<accession>F6HDT7</accession>
<name>MTND2_VITVI</name>